<name>RPOC_MYCLB</name>
<accession>B8ZSC6</accession>
<sequence>MLDVNFFDELRIGLATAEDIRQWSYGEVKKPETINYRTLKPEKDGLFCEKIFGPTRDWECYCGKYKRVRFKGIICERCGVEVTRAKVRRERMGHIELAAPVTHIWYFKGVPSRLGYLLDLAPKDLEKIIYFAAYVITTVDEEMRHNELSTLEAEMMVERKSVEDQRDADLEARAQKLEADLAALEAEGAKADARRKFRDGGEREMRQLRERAQRELDRLEDIWSTFTKLAPKQLIVDENLYRELVDRYGEYFTGAMGAESIQKLMQDFDIEAEAESLREVIRNGKGQKKLRALKRLKVVAAFQQSGNSPMGMVLDAVPVIPPELRPMVQLDGGRFATSDLNDLYRRVINRNNRLKRLIDLGAPDIIVNNEKRMLQESVDALFDNGRRGRPVTGPGNRPLKSLSDLLKGKQGRFRQNLLGKRVDYSGRSVIVVGPQLKLHQCGLPKLMALELFKPFVMKRLVDLNHAQNIKSAKRMVERQRPQVWDVLEEVIAEHPVLLNRAPTLHRLGIQAFEPMLVEGKAIQLHPLVCEAFNADFDGDQMAVHLPLSAEAQAEARILMLSSNNILSPASGRPLAMPRLDMVTGLYYLTTAVDGDTGAYRPAAEDRPESGVYSSPAEAIMAADRGVLSVRAKIKVQLTQVRPPADIEARWFGANGWRPGDPWIADTTLGRVMFNELLPLGYPFVNKQMHKKVQAAIINDLAERYPMIVVAQTVDKLKDAGFYWATRSGVTVSMADVLVPPRKKEILDHYEERADKVEKQFQRGALNHDERNEALVEIWKEATDEVGQALRDHYPVDNPIITIVDSGATGNFTQTRALAGMKGLVTNPKGEFIPRPVKSSFREGLTVLEYFINTHGARKGLADTALRTADSGYLTRRLVDVSQDVIVREHDCQTERGIVVELAVRVPDGSLIRELYIETSAYARTLGANAVDEAGNVIVARGEDLGDPEIDALLAAGITQVKVRSVLTCTTGTGVCATCYGRSMATGKLVDIGEAVGIVAAQSIGEPGTQLTMRTFHQGGVGEDITGGLPRVQELFEARVPRGKAPIADVTGRVRLEDGERFYKITIVPDDGGEEVVYDKLSKRQRLRVFKHADGSERVLSDGDYVEVGQQLMEGSADPHEVLRVQGPREVQIHLVREVQEVYRAQGVSIHDKHIEVIVRQMLRRVTIIDSGSTEFLPGSLIDRAEFESENRRVVAESGEPAAGRPVLMGITKASLATDSWLSAASFQETTRVLTDAAINCRSDKLNGLKENVIIGKLIPAGTGINRYRNIQVQPTEEARASAYTIPSYEDQYYSPDFGQATGAAVPLDDYGYSDYR</sequence>
<keyword id="KW-0240">DNA-directed RNA polymerase</keyword>
<keyword id="KW-0460">Magnesium</keyword>
<keyword id="KW-0479">Metal-binding</keyword>
<keyword id="KW-0548">Nucleotidyltransferase</keyword>
<keyword id="KW-0804">Transcription</keyword>
<keyword id="KW-0808">Transferase</keyword>
<keyword id="KW-0862">Zinc</keyword>
<dbReference type="EC" id="2.7.7.6" evidence="1"/>
<dbReference type="EMBL" id="FM211192">
    <property type="protein sequence ID" value="CAR71986.1"/>
    <property type="molecule type" value="Genomic_DNA"/>
</dbReference>
<dbReference type="SMR" id="B8ZSC6"/>
<dbReference type="KEGG" id="mlb:MLBr01890"/>
<dbReference type="HOGENOM" id="CLU_000524_3_1_11"/>
<dbReference type="Proteomes" id="UP000006900">
    <property type="component" value="Chromosome"/>
</dbReference>
<dbReference type="GO" id="GO:0000428">
    <property type="term" value="C:DNA-directed RNA polymerase complex"/>
    <property type="evidence" value="ECO:0007669"/>
    <property type="project" value="UniProtKB-KW"/>
</dbReference>
<dbReference type="GO" id="GO:0003677">
    <property type="term" value="F:DNA binding"/>
    <property type="evidence" value="ECO:0007669"/>
    <property type="project" value="UniProtKB-UniRule"/>
</dbReference>
<dbReference type="GO" id="GO:0003899">
    <property type="term" value="F:DNA-directed RNA polymerase activity"/>
    <property type="evidence" value="ECO:0007669"/>
    <property type="project" value="UniProtKB-UniRule"/>
</dbReference>
<dbReference type="GO" id="GO:0000287">
    <property type="term" value="F:magnesium ion binding"/>
    <property type="evidence" value="ECO:0007669"/>
    <property type="project" value="UniProtKB-UniRule"/>
</dbReference>
<dbReference type="GO" id="GO:0008270">
    <property type="term" value="F:zinc ion binding"/>
    <property type="evidence" value="ECO:0007669"/>
    <property type="project" value="UniProtKB-UniRule"/>
</dbReference>
<dbReference type="GO" id="GO:0006351">
    <property type="term" value="P:DNA-templated transcription"/>
    <property type="evidence" value="ECO:0007669"/>
    <property type="project" value="UniProtKB-UniRule"/>
</dbReference>
<dbReference type="CDD" id="cd02655">
    <property type="entry name" value="RNAP_beta'_C"/>
    <property type="match status" value="1"/>
</dbReference>
<dbReference type="CDD" id="cd01609">
    <property type="entry name" value="RNAP_beta'_N"/>
    <property type="match status" value="1"/>
</dbReference>
<dbReference type="FunFam" id="1.10.132.30:FF:000003">
    <property type="entry name" value="DNA-directed RNA polymerase subunit beta"/>
    <property type="match status" value="1"/>
</dbReference>
<dbReference type="FunFam" id="1.10.150.390:FF:000002">
    <property type="entry name" value="DNA-directed RNA polymerase subunit beta"/>
    <property type="match status" value="1"/>
</dbReference>
<dbReference type="FunFam" id="1.10.40.90:FF:000001">
    <property type="entry name" value="DNA-directed RNA polymerase subunit beta"/>
    <property type="match status" value="1"/>
</dbReference>
<dbReference type="FunFam" id="4.10.860.120:FF:000001">
    <property type="entry name" value="DNA-directed RNA polymerase subunit beta"/>
    <property type="match status" value="1"/>
</dbReference>
<dbReference type="Gene3D" id="1.10.132.30">
    <property type="match status" value="1"/>
</dbReference>
<dbReference type="Gene3D" id="1.10.150.390">
    <property type="match status" value="1"/>
</dbReference>
<dbReference type="Gene3D" id="1.10.1790.20">
    <property type="match status" value="1"/>
</dbReference>
<dbReference type="Gene3D" id="1.10.40.90">
    <property type="match status" value="1"/>
</dbReference>
<dbReference type="Gene3D" id="2.40.40.20">
    <property type="match status" value="1"/>
</dbReference>
<dbReference type="Gene3D" id="2.40.50.100">
    <property type="match status" value="1"/>
</dbReference>
<dbReference type="Gene3D" id="4.10.860.120">
    <property type="entry name" value="RNA polymerase II, clamp domain"/>
    <property type="match status" value="1"/>
</dbReference>
<dbReference type="Gene3D" id="1.10.274.100">
    <property type="entry name" value="RNA polymerase Rpb1, domain 3"/>
    <property type="match status" value="1"/>
</dbReference>
<dbReference type="HAMAP" id="MF_01322">
    <property type="entry name" value="RNApol_bact_RpoC"/>
    <property type="match status" value="1"/>
</dbReference>
<dbReference type="InterPro" id="IPR045867">
    <property type="entry name" value="DNA-dir_RpoC_beta_prime"/>
</dbReference>
<dbReference type="InterPro" id="IPR012754">
    <property type="entry name" value="DNA-dir_RpoC_beta_prime_bact"/>
</dbReference>
<dbReference type="InterPro" id="IPR000722">
    <property type="entry name" value="RNA_pol_asu"/>
</dbReference>
<dbReference type="InterPro" id="IPR006592">
    <property type="entry name" value="RNA_pol_N"/>
</dbReference>
<dbReference type="InterPro" id="IPR007080">
    <property type="entry name" value="RNA_pol_Rpb1_1"/>
</dbReference>
<dbReference type="InterPro" id="IPR007066">
    <property type="entry name" value="RNA_pol_Rpb1_3"/>
</dbReference>
<dbReference type="InterPro" id="IPR042102">
    <property type="entry name" value="RNA_pol_Rpb1_3_sf"/>
</dbReference>
<dbReference type="InterPro" id="IPR007083">
    <property type="entry name" value="RNA_pol_Rpb1_4"/>
</dbReference>
<dbReference type="InterPro" id="IPR007081">
    <property type="entry name" value="RNA_pol_Rpb1_5"/>
</dbReference>
<dbReference type="InterPro" id="IPR044893">
    <property type="entry name" value="RNA_pol_Rpb1_clamp_domain"/>
</dbReference>
<dbReference type="InterPro" id="IPR038120">
    <property type="entry name" value="Rpb1_funnel_sf"/>
</dbReference>
<dbReference type="NCBIfam" id="NF011498">
    <property type="entry name" value="PRK14906.1"/>
    <property type="match status" value="1"/>
</dbReference>
<dbReference type="NCBIfam" id="TIGR02386">
    <property type="entry name" value="rpoC_TIGR"/>
    <property type="match status" value="1"/>
</dbReference>
<dbReference type="PANTHER" id="PTHR19376">
    <property type="entry name" value="DNA-DIRECTED RNA POLYMERASE"/>
    <property type="match status" value="1"/>
</dbReference>
<dbReference type="PANTHER" id="PTHR19376:SF54">
    <property type="entry name" value="DNA-DIRECTED RNA POLYMERASE SUBUNIT BETA"/>
    <property type="match status" value="1"/>
</dbReference>
<dbReference type="Pfam" id="PF04997">
    <property type="entry name" value="RNA_pol_Rpb1_1"/>
    <property type="match status" value="1"/>
</dbReference>
<dbReference type="Pfam" id="PF00623">
    <property type="entry name" value="RNA_pol_Rpb1_2"/>
    <property type="match status" value="1"/>
</dbReference>
<dbReference type="Pfam" id="PF04983">
    <property type="entry name" value="RNA_pol_Rpb1_3"/>
    <property type="match status" value="1"/>
</dbReference>
<dbReference type="Pfam" id="PF05000">
    <property type="entry name" value="RNA_pol_Rpb1_4"/>
    <property type="match status" value="1"/>
</dbReference>
<dbReference type="Pfam" id="PF04998">
    <property type="entry name" value="RNA_pol_Rpb1_5"/>
    <property type="match status" value="1"/>
</dbReference>
<dbReference type="SMART" id="SM00663">
    <property type="entry name" value="RPOLA_N"/>
    <property type="match status" value="1"/>
</dbReference>
<dbReference type="SUPFAM" id="SSF64484">
    <property type="entry name" value="beta and beta-prime subunits of DNA dependent RNA-polymerase"/>
    <property type="match status" value="1"/>
</dbReference>
<comment type="function">
    <text evidence="1">DNA-dependent RNA polymerase catalyzes the transcription of DNA into RNA using the four ribonucleoside triphosphates as substrates.</text>
</comment>
<comment type="catalytic activity">
    <reaction evidence="1">
        <text>RNA(n) + a ribonucleoside 5'-triphosphate = RNA(n+1) + diphosphate</text>
        <dbReference type="Rhea" id="RHEA:21248"/>
        <dbReference type="Rhea" id="RHEA-COMP:14527"/>
        <dbReference type="Rhea" id="RHEA-COMP:17342"/>
        <dbReference type="ChEBI" id="CHEBI:33019"/>
        <dbReference type="ChEBI" id="CHEBI:61557"/>
        <dbReference type="ChEBI" id="CHEBI:140395"/>
        <dbReference type="EC" id="2.7.7.6"/>
    </reaction>
</comment>
<comment type="cofactor">
    <cofactor evidence="1">
        <name>Mg(2+)</name>
        <dbReference type="ChEBI" id="CHEBI:18420"/>
    </cofactor>
    <text evidence="1">Binds 1 Mg(2+) ion per subunit.</text>
</comment>
<comment type="cofactor">
    <cofactor evidence="1">
        <name>Zn(2+)</name>
        <dbReference type="ChEBI" id="CHEBI:29105"/>
    </cofactor>
    <text evidence="1">Binds 2 Zn(2+) ions per subunit.</text>
</comment>
<comment type="subunit">
    <text evidence="1">The RNAP catalytic core consists of 2 alpha, 1 beta, 1 beta' and 1 omega subunit. When a sigma factor is associated with the core the holoenzyme is formed, which can initiate transcription.</text>
</comment>
<comment type="similarity">
    <text evidence="1">Belongs to the RNA polymerase beta' chain family.</text>
</comment>
<feature type="chain" id="PRO_1000165846" description="DNA-directed RNA polymerase subunit beta'">
    <location>
        <begin position="1"/>
        <end position="1316"/>
    </location>
</feature>
<feature type="binding site" evidence="1">
    <location>
        <position position="60"/>
    </location>
    <ligand>
        <name>Zn(2+)</name>
        <dbReference type="ChEBI" id="CHEBI:29105"/>
        <label>1</label>
    </ligand>
</feature>
<feature type="binding site" evidence="1">
    <location>
        <position position="62"/>
    </location>
    <ligand>
        <name>Zn(2+)</name>
        <dbReference type="ChEBI" id="CHEBI:29105"/>
        <label>1</label>
    </ligand>
</feature>
<feature type="binding site" evidence="1">
    <location>
        <position position="75"/>
    </location>
    <ligand>
        <name>Zn(2+)</name>
        <dbReference type="ChEBI" id="CHEBI:29105"/>
        <label>1</label>
    </ligand>
</feature>
<feature type="binding site" evidence="1">
    <location>
        <position position="78"/>
    </location>
    <ligand>
        <name>Zn(2+)</name>
        <dbReference type="ChEBI" id="CHEBI:29105"/>
        <label>1</label>
    </ligand>
</feature>
<feature type="binding site" evidence="1">
    <location>
        <position position="535"/>
    </location>
    <ligand>
        <name>Mg(2+)</name>
        <dbReference type="ChEBI" id="CHEBI:18420"/>
    </ligand>
</feature>
<feature type="binding site" evidence="1">
    <location>
        <position position="537"/>
    </location>
    <ligand>
        <name>Mg(2+)</name>
        <dbReference type="ChEBI" id="CHEBI:18420"/>
    </ligand>
</feature>
<feature type="binding site" evidence="1">
    <location>
        <position position="539"/>
    </location>
    <ligand>
        <name>Mg(2+)</name>
        <dbReference type="ChEBI" id="CHEBI:18420"/>
    </ligand>
</feature>
<feature type="binding site" evidence="1">
    <location>
        <position position="891"/>
    </location>
    <ligand>
        <name>Zn(2+)</name>
        <dbReference type="ChEBI" id="CHEBI:29105"/>
        <label>2</label>
    </ligand>
</feature>
<feature type="binding site" evidence="1">
    <location>
        <position position="968"/>
    </location>
    <ligand>
        <name>Zn(2+)</name>
        <dbReference type="ChEBI" id="CHEBI:29105"/>
        <label>2</label>
    </ligand>
</feature>
<feature type="binding site" evidence="1">
    <location>
        <position position="975"/>
    </location>
    <ligand>
        <name>Zn(2+)</name>
        <dbReference type="ChEBI" id="CHEBI:29105"/>
        <label>2</label>
    </ligand>
</feature>
<feature type="binding site" evidence="1">
    <location>
        <position position="978"/>
    </location>
    <ligand>
        <name>Zn(2+)</name>
        <dbReference type="ChEBI" id="CHEBI:29105"/>
        <label>2</label>
    </ligand>
</feature>
<proteinExistence type="inferred from homology"/>
<evidence type="ECO:0000255" key="1">
    <source>
        <dbReference type="HAMAP-Rule" id="MF_01322"/>
    </source>
</evidence>
<gene>
    <name evidence="1" type="primary">rpoC</name>
    <name type="ordered locus">MLBr01890</name>
</gene>
<reference key="1">
    <citation type="journal article" date="2009" name="Nat. Genet.">
        <title>Comparative genomic and phylogeographic analysis of Mycobacterium leprae.</title>
        <authorList>
            <person name="Monot M."/>
            <person name="Honore N."/>
            <person name="Garnier T."/>
            <person name="Zidane N."/>
            <person name="Sherafi D."/>
            <person name="Paniz-Mondolfi A."/>
            <person name="Matsuoka M."/>
            <person name="Taylor G.M."/>
            <person name="Donoghue H.D."/>
            <person name="Bouwman A."/>
            <person name="Mays S."/>
            <person name="Watson C."/>
            <person name="Lockwood D."/>
            <person name="Khamispour A."/>
            <person name="Dowlati Y."/>
            <person name="Jianping S."/>
            <person name="Rea T.H."/>
            <person name="Vera-Cabrera L."/>
            <person name="Stefani M.M."/>
            <person name="Banu S."/>
            <person name="Macdonald M."/>
            <person name="Sapkota B.R."/>
            <person name="Spencer J.S."/>
            <person name="Thomas J."/>
            <person name="Harshman K."/>
            <person name="Singh P."/>
            <person name="Busso P."/>
            <person name="Gattiker A."/>
            <person name="Rougemont J."/>
            <person name="Brennan P.J."/>
            <person name="Cole S.T."/>
        </authorList>
    </citation>
    <scope>NUCLEOTIDE SEQUENCE [LARGE SCALE GENOMIC DNA]</scope>
    <source>
        <strain>Br4923</strain>
    </source>
</reference>
<protein>
    <recommendedName>
        <fullName evidence="1">DNA-directed RNA polymerase subunit beta'</fullName>
        <shortName evidence="1">RNAP subunit beta'</shortName>
        <ecNumber evidence="1">2.7.7.6</ecNumber>
    </recommendedName>
    <alternativeName>
        <fullName evidence="1">RNA polymerase subunit beta'</fullName>
    </alternativeName>
    <alternativeName>
        <fullName evidence="1">Transcriptase subunit beta'</fullName>
    </alternativeName>
</protein>
<organism>
    <name type="scientific">Mycobacterium leprae (strain Br4923)</name>
    <dbReference type="NCBI Taxonomy" id="561304"/>
    <lineage>
        <taxon>Bacteria</taxon>
        <taxon>Bacillati</taxon>
        <taxon>Actinomycetota</taxon>
        <taxon>Actinomycetes</taxon>
        <taxon>Mycobacteriales</taxon>
        <taxon>Mycobacteriaceae</taxon>
        <taxon>Mycobacterium</taxon>
    </lineage>
</organism>